<reference key="1">
    <citation type="journal article" date="1986" name="Gene">
        <title>Nucleotide sequence of the late region of Bacillus phage phi 29 completes the 19,285-bp sequence of phi 29 genome. Comparison with the homologous sequence of phage PZA.</title>
        <authorList>
            <person name="Vlcek C."/>
            <person name="Paces V."/>
        </authorList>
    </citation>
    <scope>NUCLEOTIDE SEQUENCE [GENOMIC DNA]</scope>
</reference>
<reference key="2">
    <citation type="journal article" date="1984" name="Gene">
        <title>Cloning, nucleotide sequence and high level expression of the gene coding for the connector protein of Bacillus subtilis phage phi 29.</title>
        <authorList>
            <person name="Garcia J.A."/>
            <person name="Mendez E."/>
            <person name="Salas M."/>
        </authorList>
    </citation>
    <scope>NUCLEOTIDE SEQUENCE [GENOMIC DNA]</scope>
</reference>
<reference key="3">
    <citation type="submission" date="2008-05" db="EMBL/GenBank/DDBJ databases">
        <authorList>
            <person name="Villegas A.P."/>
            <person name="Lingohr E.J."/>
            <person name="Ceyssens P.-J."/>
            <person name="Kropinski A.M."/>
        </authorList>
    </citation>
    <scope>NUCLEOTIDE SEQUENCE [GENOMIC DNA]</scope>
</reference>
<reference key="4">
    <citation type="journal article" date="2000" name="J. Mol. Biol.">
        <title>Topology of the components of the DNA packaging machinery in the phage phi29 prohead.</title>
        <authorList>
            <person name="Ibarra B."/>
            <person name="Caston J.R."/>
            <person name="Llorca O."/>
            <person name="Valle M."/>
            <person name="Valpuesta J.M."/>
            <person name="Carrascosa J.L."/>
        </authorList>
    </citation>
    <scope>FUNCTION</scope>
</reference>
<reference key="5">
    <citation type="journal article" date="2001" name="J. Struct. Biol.">
        <title>Composition and mass of the bacteriophage phi29 prohead and virion.</title>
        <authorList>
            <person name="Peterson C."/>
            <person name="Simon M."/>
            <person name="Hodges J."/>
            <person name="Mertens P."/>
            <person name="Higgins L."/>
            <person name="Egelman E."/>
            <person name="Anderson D."/>
        </authorList>
    </citation>
    <scope>SUBCELLULAR LOCATION</scope>
</reference>
<reference key="6">
    <citation type="journal article" date="2005" name="Nucleic Acids Res.">
        <title>Binding of pRNA to the N-terminal 14 amino acids of connector protein of bacteriophage phi29.</title>
        <authorList>
            <person name="Xiao F."/>
            <person name="Moll W.D."/>
            <person name="Guo S."/>
            <person name="Guo P."/>
        </authorList>
    </citation>
    <scope>INTERACTION WITH PACKAGING RNA</scope>
</reference>
<reference key="7">
    <citation type="journal article" date="2009" name="Virology">
        <title>In vitro incorporation of the phage Phi29 connector complex.</title>
        <authorList>
            <person name="Fu C.Y."/>
            <person name="Prevelige P.E. Jr."/>
        </authorList>
    </citation>
    <scope>FUNCTION</scope>
</reference>
<reference key="8">
    <citation type="journal article" date="2011" name="J. Mol. Biol.">
        <title>Role of phi29 connector channel loops in late-stage DNA packaging.</title>
        <authorList>
            <person name="Grimes S."/>
            <person name="Ma S."/>
            <person name="Gao J."/>
            <person name="Atz R."/>
            <person name="Jardine P.J."/>
        </authorList>
    </citation>
    <scope>FUNCTION</scope>
</reference>
<reference key="9">
    <citation type="journal article" date="2000" name="Nature">
        <title>Structure of the bacteriophage phi29 DNA packaging motor.</title>
        <authorList>
            <person name="Simpson A.A."/>
            <person name="Tao Y."/>
            <person name="Leiman P.G."/>
            <person name="Badasso M.O."/>
            <person name="He Y."/>
            <person name="Jardine P.J."/>
            <person name="Olson N.H."/>
            <person name="Morais M.C."/>
            <person name="Grimes S."/>
            <person name="Anderson D.L."/>
            <person name="Baker T.S."/>
            <person name="Rossmann M.G."/>
        </authorList>
    </citation>
    <scope>X-RAY CRYSTALLOGRAPHY (3.20 ANGSTROMS)</scope>
    <scope>SUBUNIT</scope>
    <scope>FUNCTION</scope>
</reference>
<reference key="10">
    <citation type="journal article" date="2001" name="Acta Crystallogr. D">
        <title>Structure determination of the head-tail connector of bacteriophage phi29.</title>
        <authorList>
            <person name="Simpson A.A."/>
            <person name="Leiman P.G."/>
            <person name="Tao Y."/>
            <person name="He Y."/>
            <person name="Badasso M.O."/>
            <person name="Jardine P.J."/>
            <person name="Anderson D.L."/>
            <person name="Rossmann M.G."/>
        </authorList>
    </citation>
    <scope>X-RAY CRYSTALLOGRAPHY (2.90 ANGSTROMS)</scope>
    <scope>SUBUNIT</scope>
</reference>
<reference key="11">
    <citation type="journal article" date="2002" name="J. Mol. Biol.">
        <title>Detailed architecture of a DNA translocating machine: the high-resolution structure of the bacteriophage phi29 connector particle.</title>
        <authorList>
            <person name="Guasch A."/>
            <person name="Pous J."/>
            <person name="Ibarra B."/>
            <person name="Gomis-Ruth F.X."/>
            <person name="Valpuesta J.M."/>
            <person name="Sousa N."/>
            <person name="Carrascosa J.L."/>
            <person name="Coll M."/>
        </authorList>
    </citation>
    <scope>X-RAY CRYSTALLOGRAPHY (2.10 ANGSTROMS)</scope>
    <scope>SUBUNIT</scope>
    <scope>SUBCELLULAR LOCATION</scope>
</reference>
<organism>
    <name type="scientific">Bacillus phage phi29</name>
    <name type="common">Bacteriophage phi-29</name>
    <dbReference type="NCBI Taxonomy" id="2884424"/>
    <lineage>
        <taxon>Viruses</taxon>
        <taxon>Duplodnaviria</taxon>
        <taxon>Heunggongvirae</taxon>
        <taxon>Uroviricota</taxon>
        <taxon>Caudoviricetes</taxon>
        <taxon>Salasmaviridae</taxon>
        <taxon>Picovirinae</taxon>
        <taxon>Salasvirus</taxon>
        <taxon>Salasvirus phi29</taxon>
    </lineage>
</organism>
<proteinExistence type="evidence at protein level"/>
<keyword id="KW-0002">3D-structure</keyword>
<keyword id="KW-0167">Capsid protein</keyword>
<keyword id="KW-0426">Late protein</keyword>
<keyword id="KW-1185">Reference proteome</keyword>
<keyword id="KW-0694">RNA-binding</keyword>
<keyword id="KW-0118">Viral capsid assembly</keyword>
<keyword id="KW-1171">Viral genome ejection through host cell envelope</keyword>
<keyword id="KW-0231">Viral genome packaging</keyword>
<keyword id="KW-1162">Viral penetration into host cytoplasm</keyword>
<keyword id="KW-1188">Viral release from host cell</keyword>
<keyword id="KW-1244">Viral short tail ejection system</keyword>
<keyword id="KW-0946">Virion</keyword>
<keyword id="KW-1160">Virus entry into host cell</keyword>
<evidence type="ECO:0000250" key="1">
    <source>
        <dbReference type="UniProtKB" id="P13334"/>
    </source>
</evidence>
<evidence type="ECO:0000269" key="2">
    <source>
    </source>
</evidence>
<evidence type="ECO:0000269" key="3">
    <source>
    </source>
</evidence>
<evidence type="ECO:0000269" key="4">
    <source>
    </source>
</evidence>
<evidence type="ECO:0000269" key="5">
    <source>
    </source>
</evidence>
<evidence type="ECO:0000269" key="6">
    <source>
    </source>
</evidence>
<evidence type="ECO:0000269" key="7">
    <source>
    </source>
</evidence>
<evidence type="ECO:0000269" key="8">
    <source>
    </source>
</evidence>
<evidence type="ECO:0000303" key="9">
    <source>
    </source>
</evidence>
<evidence type="ECO:0000303" key="10">
    <source>
    </source>
</evidence>
<evidence type="ECO:0000305" key="11"/>
<evidence type="ECO:0000305" key="12">
    <source>
    </source>
</evidence>
<evidence type="ECO:0007829" key="13">
    <source>
        <dbReference type="PDB" id="1FOU"/>
    </source>
</evidence>
<evidence type="ECO:0007829" key="14">
    <source>
        <dbReference type="PDB" id="1H5W"/>
    </source>
</evidence>
<protein>
    <recommendedName>
        <fullName evidence="11">Portal protein</fullName>
    </recommendedName>
    <alternativeName>
        <fullName evidence="10">Connector protein</fullName>
    </alternativeName>
    <alternativeName>
        <fullName evidence="11">Gene product 10</fullName>
        <shortName evidence="11">gp10</shortName>
    </alternativeName>
    <alternativeName>
        <fullName>Gene product 19</fullName>
        <shortName>gp19</shortName>
    </alternativeName>
    <alternativeName>
        <fullName evidence="9">Head-to-tail connector</fullName>
    </alternativeName>
    <alternativeName>
        <fullName>Probable portal protein</fullName>
    </alternativeName>
    <alternativeName>
        <fullName evidence="11">Protein p10</fullName>
    </alternativeName>
    <alternativeName>
        <fullName evidence="11">Upper collar protein</fullName>
    </alternativeName>
</protein>
<feature type="chain" id="PRO_0000106586" description="Portal protein">
    <location>
        <begin position="1"/>
        <end position="309"/>
    </location>
</feature>
<feature type="region of interest" description="Binding to the pRNA" evidence="6">
    <location>
        <begin position="1"/>
        <end position="14"/>
    </location>
</feature>
<feature type="helix" evidence="13">
    <location>
        <begin position="14"/>
        <end position="16"/>
    </location>
</feature>
<feature type="helix" evidence="14">
    <location>
        <begin position="18"/>
        <end position="36"/>
    </location>
</feature>
<feature type="strand" evidence="14">
    <location>
        <begin position="38"/>
        <end position="43"/>
    </location>
</feature>
<feature type="helix" evidence="14">
    <location>
        <begin position="50"/>
        <end position="60"/>
    </location>
</feature>
<feature type="strand" evidence="14">
    <location>
        <begin position="61"/>
        <end position="68"/>
    </location>
</feature>
<feature type="turn" evidence="14">
    <location>
        <begin position="69"/>
        <end position="71"/>
    </location>
</feature>
<feature type="strand" evidence="14">
    <location>
        <begin position="72"/>
        <end position="76"/>
    </location>
</feature>
<feature type="strand" evidence="14">
    <location>
        <begin position="78"/>
        <end position="82"/>
    </location>
</feature>
<feature type="strand" evidence="13">
    <location>
        <begin position="86"/>
        <end position="88"/>
    </location>
</feature>
<feature type="strand" evidence="14">
    <location>
        <begin position="92"/>
        <end position="96"/>
    </location>
</feature>
<feature type="strand" evidence="13">
    <location>
        <begin position="97"/>
        <end position="99"/>
    </location>
</feature>
<feature type="strand" evidence="14">
    <location>
        <begin position="101"/>
        <end position="106"/>
    </location>
</feature>
<feature type="strand" evidence="14">
    <location>
        <begin position="110"/>
        <end position="112"/>
    </location>
</feature>
<feature type="strand" evidence="14">
    <location>
        <begin position="118"/>
        <end position="124"/>
    </location>
</feature>
<feature type="helix" evidence="14">
    <location>
        <begin position="131"/>
        <end position="154"/>
    </location>
</feature>
<feature type="strand" evidence="14">
    <location>
        <begin position="159"/>
        <end position="163"/>
    </location>
</feature>
<feature type="helix" evidence="14">
    <location>
        <begin position="166"/>
        <end position="168"/>
    </location>
</feature>
<feature type="helix" evidence="14">
    <location>
        <begin position="171"/>
        <end position="176"/>
    </location>
</feature>
<feature type="strand" evidence="14">
    <location>
        <begin position="180"/>
        <end position="183"/>
    </location>
</feature>
<feature type="strand" evidence="14">
    <location>
        <begin position="195"/>
        <end position="200"/>
    </location>
</feature>
<feature type="helix" evidence="14">
    <location>
        <begin position="207"/>
        <end position="224"/>
    </location>
</feature>
<feature type="helix" evidence="14">
    <location>
        <begin position="247"/>
        <end position="272"/>
    </location>
</feature>
<feature type="strand" evidence="14">
    <location>
        <begin position="277"/>
        <end position="281"/>
    </location>
</feature>
<accession>P04332</accession>
<accession>B3VMP6</accession>
<dbReference type="EMBL" id="M14782">
    <property type="protein sequence ID" value="AAA32283.1"/>
    <property type="molecule type" value="Genomic_DNA"/>
</dbReference>
<dbReference type="EMBL" id="M12456">
    <property type="protein sequence ID" value="AAA32292.1"/>
    <property type="molecule type" value="Genomic_DNA"/>
</dbReference>
<dbReference type="EMBL" id="EU771092">
    <property type="protein sequence ID" value="ACE96033.1"/>
    <property type="molecule type" value="Genomic_DNA"/>
</dbReference>
<dbReference type="PIR" id="E25816">
    <property type="entry name" value="WMBPC9"/>
</dbReference>
<dbReference type="RefSeq" id="YP_002004539.1">
    <property type="nucleotide sequence ID" value="NC_011048.1"/>
</dbReference>
<dbReference type="PDB" id="1FOU">
    <property type="method" value="X-ray"/>
    <property type="resolution" value="3.20 A"/>
    <property type="chains" value="A/B/C/D/E/F/G/H/I/J/K/L=1-309"/>
</dbReference>
<dbReference type="PDB" id="1H5W">
    <property type="method" value="X-ray"/>
    <property type="resolution" value="2.10 A"/>
    <property type="chains" value="A/B/C=1-309"/>
</dbReference>
<dbReference type="PDB" id="1IJG">
    <property type="method" value="X-ray"/>
    <property type="resolution" value="2.90 A"/>
    <property type="chains" value="A/B/C/D/E/F/G/H/I/J/K/L=1-309"/>
</dbReference>
<dbReference type="PDB" id="1JNB">
    <property type="method" value="X-ray"/>
    <property type="resolution" value="3.20 A"/>
    <property type="chains" value="A/B/C/D/E/F/G/H/I/J/K/L=1-309"/>
</dbReference>
<dbReference type="PDB" id="6QX7">
    <property type="method" value="EM"/>
    <property type="resolution" value="3.80 A"/>
    <property type="chains" value="0a/0b/0c/0d/0e/0f/0g/0h/0i/0j/0k/0l=1-309"/>
</dbReference>
<dbReference type="PDB" id="6QYJ">
    <property type="method" value="EM"/>
    <property type="resolution" value="3.40 A"/>
    <property type="chains" value="0a/0b/0c/0d/0e/0f/0g/0h/0i/0j/0k/0l=1-309"/>
</dbReference>
<dbReference type="PDB" id="6QYM">
    <property type="method" value="EM"/>
    <property type="resolution" value="3.60 A"/>
    <property type="chains" value="0a/0b/0c/0d/0e/0f/0g/0h/0i/0j/0k/0l=1-309"/>
</dbReference>
<dbReference type="PDB" id="6QZ9">
    <property type="method" value="EM"/>
    <property type="resolution" value="3.30 A"/>
    <property type="chains" value="0a/0b/0c/0d/0e/0f/0g/0h/0i/0j/0k/0l=1-309"/>
</dbReference>
<dbReference type="PDB" id="6QZF">
    <property type="method" value="EM"/>
    <property type="resolution" value="3.80 A"/>
    <property type="chains" value="0a/0b/0c/0d/0e/0f/0g/0h/0i/0j/0k/0l=1-309"/>
</dbReference>
<dbReference type="PDBsum" id="1FOU"/>
<dbReference type="PDBsum" id="1H5W"/>
<dbReference type="PDBsum" id="1IJG"/>
<dbReference type="PDBsum" id="1JNB"/>
<dbReference type="PDBsum" id="6QX7"/>
<dbReference type="PDBsum" id="6QYJ"/>
<dbReference type="PDBsum" id="6QYM"/>
<dbReference type="PDBsum" id="6QZ9"/>
<dbReference type="PDBsum" id="6QZF"/>
<dbReference type="EMDB" id="EMD-4662"/>
<dbReference type="EMDB" id="EMD-4678"/>
<dbReference type="EMDB" id="EMD-4679"/>
<dbReference type="EMDB" id="EMD-4684"/>
<dbReference type="EMDB" id="EMD-4685"/>
<dbReference type="SMR" id="P04332"/>
<dbReference type="TCDB" id="1.W.6.1.1">
    <property type="family name" value="the (bacillus phage phi29) portal protein 6 (ppp6) family"/>
</dbReference>
<dbReference type="GeneID" id="6446518"/>
<dbReference type="KEGG" id="vg:6446518"/>
<dbReference type="EvolutionaryTrace" id="P04332"/>
<dbReference type="Proteomes" id="UP000001207">
    <property type="component" value="Genome"/>
</dbReference>
<dbReference type="GO" id="GO:0046798">
    <property type="term" value="C:viral portal complex"/>
    <property type="evidence" value="ECO:0000314"/>
    <property type="project" value="UniProtKB"/>
</dbReference>
<dbReference type="GO" id="GO:0046729">
    <property type="term" value="C:viral procapsid"/>
    <property type="evidence" value="ECO:0000314"/>
    <property type="project" value="CACAO"/>
</dbReference>
<dbReference type="GO" id="GO:0003723">
    <property type="term" value="F:RNA binding"/>
    <property type="evidence" value="ECO:0007669"/>
    <property type="project" value="UniProtKB-KW"/>
</dbReference>
<dbReference type="GO" id="GO:0099002">
    <property type="term" value="P:symbiont genome ejection through host cell envelope, short tail mechanism"/>
    <property type="evidence" value="ECO:0007669"/>
    <property type="project" value="UniProtKB-KW"/>
</dbReference>
<dbReference type="GO" id="GO:0019073">
    <property type="term" value="P:viral DNA genome packaging"/>
    <property type="evidence" value="ECO:0000314"/>
    <property type="project" value="UniProtKB"/>
</dbReference>
<dbReference type="Gene3D" id="1.10.246.30">
    <property type="match status" value="1"/>
</dbReference>
<dbReference type="Gene3D" id="3.30.1350.20">
    <property type="entry name" value="Bacteriophage PHI-29 conector. Domain 3"/>
    <property type="match status" value="1"/>
</dbReference>
<dbReference type="Gene3D" id="2.40.500.10">
    <property type="entry name" value="Upper collar protein gp10 (connector protein)"/>
    <property type="match status" value="1"/>
</dbReference>
<dbReference type="InterPro" id="IPR008016">
    <property type="entry name" value="Gp10"/>
</dbReference>
<dbReference type="InterPro" id="IPR036199">
    <property type="entry name" value="Gp10_sf"/>
</dbReference>
<dbReference type="Pfam" id="PF05352">
    <property type="entry name" value="Phage_connector"/>
    <property type="match status" value="1"/>
</dbReference>
<dbReference type="SUPFAM" id="SSF56826">
    <property type="entry name" value="Upper collar protein gp10 (connector protein)"/>
    <property type="match status" value="1"/>
</dbReference>
<sequence length="309" mass="35878">MARKRSNTYRSINEIQRQKRNRWFIHYLNYLQSLAYQLFEWENLPPTINPSFLEKSIHQFGYVGFYKDPVISYIACNGALSGQRDVYNQATVFRAASPVYQKEFKLYNYRDMKEEDMGVVIYNNDMAFPTTPTLELFAAELAELKEIISVNQNAQKTPVLIRANDNNQLSLKQVYNQYEGNAPVIFAHEALDSDSIEVFKTDAPYVVDKLNAQKNAVWNEMMTFLGIKNANLEKKERMVTDEVSSNDEQIESSGTVFLKSREEACEKINELYGLNVKVKFRYDIVEQMRRELQQIENVSRGTSDGETNE</sequence>
<name>PORTL_BPPH2</name>
<organismHost>
    <name type="scientific">Bacillus subtilis</name>
    <dbReference type="NCBI Taxonomy" id="1423"/>
</organismHost>
<gene>
    <name type="primary">10</name>
</gene>
<comment type="function">
    <text evidence="1 2 5 6 7 8 12">Forms the portal vertex of the capsid (PubMed:10801350, PubMed:19744688, PubMed:21570409). This portal plays critical roles in head assembly, genome packaging, neck/tail attachment, and genome ejection (By similarity). The portal protein multimerizes as a single ring-shaped homododecamer arranged around a central channel (PubMed:11812138, PubMed:21570409). Binds to the 6 packaging RNA molecules (pRNA) forming a double-ring structure which in turn binds to the ATPase gp16 hexamer, forming the active DNA-translocating motor (PubMed:11130079, PubMed:15886394). This complex is essential for the specificity of packaging from the left DNA end.</text>
</comment>
<comment type="subunit">
    <text evidence="2 3 5 6">Homododecamer (PubMed:11130079, PubMed:11526317, PubMed:11812138). Interacts (via N-terminus) with the pRNA (PubMed:15886394).</text>
</comment>
<comment type="subcellular location">
    <subcellularLocation>
        <location evidence="4">Virion</location>
    </subcellularLocation>
    <text evidence="4 5">Present in 12 copies in the virion.</text>
</comment>
<comment type="similarity">
    <text evidence="11">Belongs to the phi29likevirus portal protein family.</text>
</comment>